<evidence type="ECO:0000250" key="1">
    <source>
        <dbReference type="UniProtKB" id="P02086"/>
    </source>
</evidence>
<evidence type="ECO:0000250" key="2">
    <source>
        <dbReference type="UniProtKB" id="P68871"/>
    </source>
</evidence>
<evidence type="ECO:0000255" key="3">
    <source>
        <dbReference type="PROSITE-ProRule" id="PRU00238"/>
    </source>
</evidence>
<gene>
    <name type="primary">HBB</name>
</gene>
<organism>
    <name type="scientific">Saguinus mystax</name>
    <name type="common">Moustached tamarin</name>
    <dbReference type="NCBI Taxonomy" id="9488"/>
    <lineage>
        <taxon>Eukaryota</taxon>
        <taxon>Metazoa</taxon>
        <taxon>Chordata</taxon>
        <taxon>Craniata</taxon>
        <taxon>Vertebrata</taxon>
        <taxon>Euteleostomi</taxon>
        <taxon>Mammalia</taxon>
        <taxon>Eutheria</taxon>
        <taxon>Euarchontoglires</taxon>
        <taxon>Primates</taxon>
        <taxon>Haplorrhini</taxon>
        <taxon>Platyrrhini</taxon>
        <taxon>Cebidae</taxon>
        <taxon>Callitrichinae</taxon>
        <taxon>Saguinus</taxon>
    </lineage>
</organism>
<keyword id="KW-0007">Acetylation</keyword>
<keyword id="KW-0903">Direct protein sequencing</keyword>
<keyword id="KW-0349">Heme</keyword>
<keyword id="KW-0408">Iron</keyword>
<keyword id="KW-0479">Metal-binding</keyword>
<keyword id="KW-0561">Oxygen transport</keyword>
<keyword id="KW-0597">Phosphoprotein</keyword>
<keyword id="KW-0702">S-nitrosylation</keyword>
<keyword id="KW-0813">Transport</keyword>
<feature type="chain" id="PRO_0000053096" description="Hemoglobin subunit beta">
    <location>
        <begin position="1"/>
        <end position="146"/>
    </location>
</feature>
<feature type="domain" description="Globin" evidence="3">
    <location>
        <begin position="2"/>
        <end position="146"/>
    </location>
</feature>
<feature type="binding site" description="distal binding residue">
    <location>
        <position position="63"/>
    </location>
    <ligand>
        <name>heme b</name>
        <dbReference type="ChEBI" id="CHEBI:60344"/>
    </ligand>
    <ligandPart>
        <name>Fe</name>
        <dbReference type="ChEBI" id="CHEBI:18248"/>
    </ligandPart>
</feature>
<feature type="binding site" description="proximal binding residue">
    <location>
        <position position="92"/>
    </location>
    <ligand>
        <name>heme b</name>
        <dbReference type="ChEBI" id="CHEBI:60344"/>
    </ligand>
    <ligandPart>
        <name>Fe</name>
        <dbReference type="ChEBI" id="CHEBI:18248"/>
    </ligandPart>
</feature>
<feature type="modified residue" description="N-acetylvaline" evidence="1">
    <location>
        <position position="1"/>
    </location>
</feature>
<feature type="modified residue" description="Phosphothreonine" evidence="2">
    <location>
        <position position="12"/>
    </location>
</feature>
<feature type="modified residue" description="Phosphoserine" evidence="2">
    <location>
        <position position="44"/>
    </location>
</feature>
<feature type="modified residue" description="N6-acetyllysine" evidence="2">
    <location>
        <position position="59"/>
    </location>
</feature>
<feature type="modified residue" description="N6-acetyllysine" evidence="2">
    <location>
        <position position="82"/>
    </location>
</feature>
<feature type="modified residue" description="S-nitrosocysteine" evidence="2">
    <location>
        <position position="93"/>
    </location>
</feature>
<feature type="modified residue" description="N6-acetyllysine" evidence="2">
    <location>
        <position position="144"/>
    </location>
</feature>
<dbReference type="PIR" id="A02359">
    <property type="entry name" value="HBMKM"/>
</dbReference>
<dbReference type="SMR" id="P02038"/>
<dbReference type="GO" id="GO:0072562">
    <property type="term" value="C:blood microparticle"/>
    <property type="evidence" value="ECO:0007669"/>
    <property type="project" value="TreeGrafter"/>
</dbReference>
<dbReference type="GO" id="GO:0031838">
    <property type="term" value="C:haptoglobin-hemoglobin complex"/>
    <property type="evidence" value="ECO:0007669"/>
    <property type="project" value="TreeGrafter"/>
</dbReference>
<dbReference type="GO" id="GO:0005833">
    <property type="term" value="C:hemoglobin complex"/>
    <property type="evidence" value="ECO:0007669"/>
    <property type="project" value="InterPro"/>
</dbReference>
<dbReference type="GO" id="GO:0031720">
    <property type="term" value="F:haptoglobin binding"/>
    <property type="evidence" value="ECO:0007669"/>
    <property type="project" value="TreeGrafter"/>
</dbReference>
<dbReference type="GO" id="GO:0020037">
    <property type="term" value="F:heme binding"/>
    <property type="evidence" value="ECO:0007669"/>
    <property type="project" value="InterPro"/>
</dbReference>
<dbReference type="GO" id="GO:0031721">
    <property type="term" value="F:hemoglobin alpha binding"/>
    <property type="evidence" value="ECO:0007669"/>
    <property type="project" value="TreeGrafter"/>
</dbReference>
<dbReference type="GO" id="GO:0046872">
    <property type="term" value="F:metal ion binding"/>
    <property type="evidence" value="ECO:0007669"/>
    <property type="project" value="UniProtKB-KW"/>
</dbReference>
<dbReference type="GO" id="GO:0043177">
    <property type="term" value="F:organic acid binding"/>
    <property type="evidence" value="ECO:0007669"/>
    <property type="project" value="TreeGrafter"/>
</dbReference>
<dbReference type="GO" id="GO:0019825">
    <property type="term" value="F:oxygen binding"/>
    <property type="evidence" value="ECO:0007669"/>
    <property type="project" value="InterPro"/>
</dbReference>
<dbReference type="GO" id="GO:0005344">
    <property type="term" value="F:oxygen carrier activity"/>
    <property type="evidence" value="ECO:0007669"/>
    <property type="project" value="UniProtKB-KW"/>
</dbReference>
<dbReference type="GO" id="GO:0004601">
    <property type="term" value="F:peroxidase activity"/>
    <property type="evidence" value="ECO:0007669"/>
    <property type="project" value="TreeGrafter"/>
</dbReference>
<dbReference type="GO" id="GO:0042744">
    <property type="term" value="P:hydrogen peroxide catabolic process"/>
    <property type="evidence" value="ECO:0007669"/>
    <property type="project" value="TreeGrafter"/>
</dbReference>
<dbReference type="CDD" id="cd08925">
    <property type="entry name" value="Hb-beta-like"/>
    <property type="match status" value="1"/>
</dbReference>
<dbReference type="FunFam" id="1.10.490.10:FF:000001">
    <property type="entry name" value="Hemoglobin subunit beta"/>
    <property type="match status" value="1"/>
</dbReference>
<dbReference type="Gene3D" id="1.10.490.10">
    <property type="entry name" value="Globins"/>
    <property type="match status" value="1"/>
</dbReference>
<dbReference type="InterPro" id="IPR000971">
    <property type="entry name" value="Globin"/>
</dbReference>
<dbReference type="InterPro" id="IPR009050">
    <property type="entry name" value="Globin-like_sf"/>
</dbReference>
<dbReference type="InterPro" id="IPR012292">
    <property type="entry name" value="Globin/Proto"/>
</dbReference>
<dbReference type="InterPro" id="IPR002337">
    <property type="entry name" value="Hemoglobin_b"/>
</dbReference>
<dbReference type="InterPro" id="IPR050056">
    <property type="entry name" value="Hemoglobin_oxygen_transport"/>
</dbReference>
<dbReference type="PANTHER" id="PTHR11442">
    <property type="entry name" value="HEMOGLOBIN FAMILY MEMBER"/>
    <property type="match status" value="1"/>
</dbReference>
<dbReference type="PANTHER" id="PTHR11442:SF42">
    <property type="entry name" value="HEMOGLOBIN SUBUNIT BETA"/>
    <property type="match status" value="1"/>
</dbReference>
<dbReference type="Pfam" id="PF00042">
    <property type="entry name" value="Globin"/>
    <property type="match status" value="1"/>
</dbReference>
<dbReference type="PRINTS" id="PR00814">
    <property type="entry name" value="BETAHAEM"/>
</dbReference>
<dbReference type="SUPFAM" id="SSF46458">
    <property type="entry name" value="Globin-like"/>
    <property type="match status" value="1"/>
</dbReference>
<dbReference type="PROSITE" id="PS01033">
    <property type="entry name" value="GLOBIN"/>
    <property type="match status" value="1"/>
</dbReference>
<sequence length="146" mass="15958">VHLTGEEKSAVTTLWGKVNVEEVGGEALGRLLVVYPWTQRFFDSFGDLSSPDAVMNNPKVKAHGKKVLGAFSDGLAHLDNLKGTFAQLSELHCDKLHVDPENFRLLGNVLVCVLAHHFGKEFTPQVQAAYQKVVAGVANALAHKYH</sequence>
<accession>P02038</accession>
<reference key="1">
    <citation type="journal article" date="1971" name="Biochem. Genet.">
        <title>Primate hemoglobins: some sequences and some proposals concerning the character of evolution and mutation.</title>
        <authorList>
            <person name="Boyer S.H."/>
            <person name="Crosby E.F."/>
            <person name="Noyes A.N."/>
            <person name="Fuller G.F."/>
            <person name="Leslie S.E."/>
            <person name="Donaldson L.J."/>
            <person name="Vrablik G.R."/>
            <person name="Schaefer E.W. Jr."/>
            <person name="Thurmon T.F."/>
        </authorList>
    </citation>
    <scope>PROTEIN SEQUENCE</scope>
</reference>
<proteinExistence type="evidence at protein level"/>
<comment type="function">
    <text>Involved in oxygen transport from the lung to the various peripheral tissues.</text>
</comment>
<comment type="subunit">
    <text>Heterotetramer of two alpha chains and two beta chains.</text>
</comment>
<comment type="tissue specificity">
    <text>Red blood cells.</text>
</comment>
<comment type="similarity">
    <text evidence="3">Belongs to the globin family.</text>
</comment>
<name>HBB_SAGMY</name>
<protein>
    <recommendedName>
        <fullName>Hemoglobin subunit beta</fullName>
    </recommendedName>
    <alternativeName>
        <fullName>Beta-globin</fullName>
    </alternativeName>
    <alternativeName>
        <fullName>Hemoglobin beta chain</fullName>
    </alternativeName>
</protein>